<name>PDCB4_ARATH</name>
<reference key="1">
    <citation type="journal article" date="2000" name="Nature">
        <title>Sequence and analysis of chromosome 1 of the plant Arabidopsis thaliana.</title>
        <authorList>
            <person name="Theologis A."/>
            <person name="Ecker J.R."/>
            <person name="Palm C.J."/>
            <person name="Federspiel N.A."/>
            <person name="Kaul S."/>
            <person name="White O."/>
            <person name="Alonso J."/>
            <person name="Altafi H."/>
            <person name="Araujo R."/>
            <person name="Bowman C.L."/>
            <person name="Brooks S.Y."/>
            <person name="Buehler E."/>
            <person name="Chan A."/>
            <person name="Chao Q."/>
            <person name="Chen H."/>
            <person name="Cheuk R.F."/>
            <person name="Chin C.W."/>
            <person name="Chung M.K."/>
            <person name="Conn L."/>
            <person name="Conway A.B."/>
            <person name="Conway A.R."/>
            <person name="Creasy T.H."/>
            <person name="Dewar K."/>
            <person name="Dunn P."/>
            <person name="Etgu P."/>
            <person name="Feldblyum T.V."/>
            <person name="Feng J.-D."/>
            <person name="Fong B."/>
            <person name="Fujii C.Y."/>
            <person name="Gill J.E."/>
            <person name="Goldsmith A.D."/>
            <person name="Haas B."/>
            <person name="Hansen N.F."/>
            <person name="Hughes B."/>
            <person name="Huizar L."/>
            <person name="Hunter J.L."/>
            <person name="Jenkins J."/>
            <person name="Johnson-Hopson C."/>
            <person name="Khan S."/>
            <person name="Khaykin E."/>
            <person name="Kim C.J."/>
            <person name="Koo H.L."/>
            <person name="Kremenetskaia I."/>
            <person name="Kurtz D.B."/>
            <person name="Kwan A."/>
            <person name="Lam B."/>
            <person name="Langin-Hooper S."/>
            <person name="Lee A."/>
            <person name="Lee J.M."/>
            <person name="Lenz C.A."/>
            <person name="Li J.H."/>
            <person name="Li Y.-P."/>
            <person name="Lin X."/>
            <person name="Liu S.X."/>
            <person name="Liu Z.A."/>
            <person name="Luros J.S."/>
            <person name="Maiti R."/>
            <person name="Marziali A."/>
            <person name="Militscher J."/>
            <person name="Miranda M."/>
            <person name="Nguyen M."/>
            <person name="Nierman W.C."/>
            <person name="Osborne B.I."/>
            <person name="Pai G."/>
            <person name="Peterson J."/>
            <person name="Pham P.K."/>
            <person name="Rizzo M."/>
            <person name="Rooney T."/>
            <person name="Rowley D."/>
            <person name="Sakano H."/>
            <person name="Salzberg S.L."/>
            <person name="Schwartz J.R."/>
            <person name="Shinn P."/>
            <person name="Southwick A.M."/>
            <person name="Sun H."/>
            <person name="Tallon L.J."/>
            <person name="Tambunga G."/>
            <person name="Toriumi M.J."/>
            <person name="Town C.D."/>
            <person name="Utterback T."/>
            <person name="Van Aken S."/>
            <person name="Vaysberg M."/>
            <person name="Vysotskaia V.S."/>
            <person name="Walker M."/>
            <person name="Wu D."/>
            <person name="Yu G."/>
            <person name="Fraser C.M."/>
            <person name="Venter J.C."/>
            <person name="Davis R.W."/>
        </authorList>
    </citation>
    <scope>NUCLEOTIDE SEQUENCE [LARGE SCALE GENOMIC DNA]</scope>
    <source>
        <strain>cv. Columbia</strain>
    </source>
</reference>
<reference key="2">
    <citation type="journal article" date="2017" name="Plant J.">
        <title>Araport11: a complete reannotation of the Arabidopsis thaliana reference genome.</title>
        <authorList>
            <person name="Cheng C.Y."/>
            <person name="Krishnakumar V."/>
            <person name="Chan A.P."/>
            <person name="Thibaud-Nissen F."/>
            <person name="Schobel S."/>
            <person name="Town C.D."/>
        </authorList>
    </citation>
    <scope>GENOME REANNOTATION</scope>
    <source>
        <strain>cv. Columbia</strain>
    </source>
</reference>
<reference key="3">
    <citation type="journal article" date="2002" name="Science">
        <title>Functional annotation of a full-length Arabidopsis cDNA collection.</title>
        <authorList>
            <person name="Seki M."/>
            <person name="Narusaka M."/>
            <person name="Kamiya A."/>
            <person name="Ishida J."/>
            <person name="Satou M."/>
            <person name="Sakurai T."/>
            <person name="Nakajima M."/>
            <person name="Enju A."/>
            <person name="Akiyama K."/>
            <person name="Oono Y."/>
            <person name="Muramatsu M."/>
            <person name="Hayashizaki Y."/>
            <person name="Kawai J."/>
            <person name="Carninci P."/>
            <person name="Itoh M."/>
            <person name="Ishii Y."/>
            <person name="Arakawa T."/>
            <person name="Shibata K."/>
            <person name="Shinagawa A."/>
            <person name="Shinozaki K."/>
        </authorList>
    </citation>
    <scope>NUCLEOTIDE SEQUENCE [LARGE SCALE MRNA] (ISOFORM 2)</scope>
    <source>
        <strain>cv. Columbia</strain>
    </source>
</reference>
<reference key="4">
    <citation type="journal article" date="2003" name="Science">
        <title>Empirical analysis of transcriptional activity in the Arabidopsis genome.</title>
        <authorList>
            <person name="Yamada K."/>
            <person name="Lim J."/>
            <person name="Dale J.M."/>
            <person name="Chen H."/>
            <person name="Shinn P."/>
            <person name="Palm C.J."/>
            <person name="Southwick A.M."/>
            <person name="Wu H.C."/>
            <person name="Kim C.J."/>
            <person name="Nguyen M."/>
            <person name="Pham P.K."/>
            <person name="Cheuk R.F."/>
            <person name="Karlin-Newmann G."/>
            <person name="Liu S.X."/>
            <person name="Lam B."/>
            <person name="Sakano H."/>
            <person name="Wu T."/>
            <person name="Yu G."/>
            <person name="Miranda M."/>
            <person name="Quach H.L."/>
            <person name="Tripp M."/>
            <person name="Chang C.H."/>
            <person name="Lee J.M."/>
            <person name="Toriumi M.J."/>
            <person name="Chan M.M."/>
            <person name="Tang C.C."/>
            <person name="Onodera C.S."/>
            <person name="Deng J.M."/>
            <person name="Akiyama K."/>
            <person name="Ansari Y."/>
            <person name="Arakawa T."/>
            <person name="Banh J."/>
            <person name="Banno F."/>
            <person name="Bowser L."/>
            <person name="Brooks S.Y."/>
            <person name="Carninci P."/>
            <person name="Chao Q."/>
            <person name="Choy N."/>
            <person name="Enju A."/>
            <person name="Goldsmith A.D."/>
            <person name="Gurjal M."/>
            <person name="Hansen N.F."/>
            <person name="Hayashizaki Y."/>
            <person name="Johnson-Hopson C."/>
            <person name="Hsuan V.W."/>
            <person name="Iida K."/>
            <person name="Karnes M."/>
            <person name="Khan S."/>
            <person name="Koesema E."/>
            <person name="Ishida J."/>
            <person name="Jiang P.X."/>
            <person name="Jones T."/>
            <person name="Kawai J."/>
            <person name="Kamiya A."/>
            <person name="Meyers C."/>
            <person name="Nakajima M."/>
            <person name="Narusaka M."/>
            <person name="Seki M."/>
            <person name="Sakurai T."/>
            <person name="Satou M."/>
            <person name="Tamse R."/>
            <person name="Vaysberg M."/>
            <person name="Wallender E.K."/>
            <person name="Wong C."/>
            <person name="Yamamura Y."/>
            <person name="Yuan S."/>
            <person name="Shinozaki K."/>
            <person name="Davis R.W."/>
            <person name="Theologis A."/>
            <person name="Ecker J.R."/>
        </authorList>
    </citation>
    <scope>NUCLEOTIDE SEQUENCE [LARGE SCALE MRNA] (ISOFORM 1)</scope>
    <source>
        <strain>cv. Columbia</strain>
    </source>
</reference>
<reference key="5">
    <citation type="submission" date="2004-09" db="EMBL/GenBank/DDBJ databases">
        <title>Large-scale analysis of RIKEN Arabidopsis full-length (RAFL) cDNAs.</title>
        <authorList>
            <person name="Totoki Y."/>
            <person name="Seki M."/>
            <person name="Ishida J."/>
            <person name="Nakajima M."/>
            <person name="Enju A."/>
            <person name="Kamiya A."/>
            <person name="Narusaka M."/>
            <person name="Shin-i T."/>
            <person name="Nakagawa M."/>
            <person name="Sakamoto N."/>
            <person name="Oishi K."/>
            <person name="Kohara Y."/>
            <person name="Kobayashi M."/>
            <person name="Toyoda A."/>
            <person name="Sakaki Y."/>
            <person name="Sakurai T."/>
            <person name="Iida K."/>
            <person name="Akiyama K."/>
            <person name="Satou M."/>
            <person name="Toyoda T."/>
            <person name="Konagaya A."/>
            <person name="Carninci P."/>
            <person name="Kawai J."/>
            <person name="Hayashizaki Y."/>
            <person name="Shinozaki K."/>
        </authorList>
    </citation>
    <scope>NUCLEOTIDE SEQUENCE [LARGE SCALE MRNA] (ISOFORMS 1 AND 2)</scope>
    <source>
        <strain>cv. Columbia</strain>
    </source>
</reference>
<reference key="6">
    <citation type="submission" date="2002-03" db="EMBL/GenBank/DDBJ databases">
        <title>Full-length cDNA from Arabidopsis thaliana.</title>
        <authorList>
            <person name="Brover V.V."/>
            <person name="Troukhan M.E."/>
            <person name="Alexandrov N.A."/>
            <person name="Lu Y.-P."/>
            <person name="Flavell R.B."/>
            <person name="Feldmann K.A."/>
        </authorList>
    </citation>
    <scope>NUCLEOTIDE SEQUENCE [LARGE SCALE MRNA] (ISOFORM 1)</scope>
</reference>
<reference key="7">
    <citation type="journal article" date="2009" name="Plant Cell">
        <title>An Arabidopsis GPI-anchor plasmodesmal neck protein with callose binding activity and potential to regulate cell-to-cell trafficking.</title>
        <authorList>
            <person name="Simpson C."/>
            <person name="Thomas C."/>
            <person name="Findlay K."/>
            <person name="Bayer E."/>
            <person name="Maule A.J."/>
        </authorList>
    </citation>
    <scope>GENE FAMILY</scope>
    <scope>NOMENCLATURE</scope>
    <scope>SUBCELLULAR LOCATION</scope>
    <scope>GPI-ANCHOR</scope>
</reference>
<dbReference type="EMBL" id="AC018364">
    <property type="protein sequence ID" value="AAG52501.1"/>
    <property type="status" value="ALT_SEQ"/>
    <property type="molecule type" value="Genomic_DNA"/>
</dbReference>
<dbReference type="EMBL" id="CP002684">
    <property type="protein sequence ID" value="AEE34907.1"/>
    <property type="molecule type" value="Genomic_DNA"/>
</dbReference>
<dbReference type="EMBL" id="AK118559">
    <property type="protein sequence ID" value="BAC43160.1"/>
    <property type="molecule type" value="mRNA"/>
</dbReference>
<dbReference type="EMBL" id="AF370153">
    <property type="protein sequence ID" value="AAK43968.1"/>
    <property type="molecule type" value="mRNA"/>
</dbReference>
<dbReference type="EMBL" id="AF412078">
    <property type="protein sequence ID" value="AAL06531.1"/>
    <property type="molecule type" value="mRNA"/>
</dbReference>
<dbReference type="EMBL" id="AY056376">
    <property type="protein sequence ID" value="AAL08232.1"/>
    <property type="molecule type" value="mRNA"/>
</dbReference>
<dbReference type="EMBL" id="AY059094">
    <property type="protein sequence ID" value="AAL15200.1"/>
    <property type="molecule type" value="mRNA"/>
</dbReference>
<dbReference type="EMBL" id="AK175349">
    <property type="protein sequence ID" value="BAD43112.1"/>
    <property type="molecule type" value="mRNA"/>
</dbReference>
<dbReference type="EMBL" id="AK175595">
    <property type="protein sequence ID" value="BAD43358.1"/>
    <property type="molecule type" value="mRNA"/>
</dbReference>
<dbReference type="EMBL" id="AK175601">
    <property type="protein sequence ID" value="BAD43364.1"/>
    <property type="molecule type" value="mRNA"/>
</dbReference>
<dbReference type="EMBL" id="AK175695">
    <property type="protein sequence ID" value="BAD43458.1"/>
    <property type="molecule type" value="mRNA"/>
</dbReference>
<dbReference type="EMBL" id="AK175701">
    <property type="protein sequence ID" value="BAD43464.1"/>
    <property type="status" value="ALT_FRAME"/>
    <property type="molecule type" value="mRNA"/>
</dbReference>
<dbReference type="EMBL" id="AK175748">
    <property type="protein sequence ID" value="BAD43511.1"/>
    <property type="molecule type" value="mRNA"/>
</dbReference>
<dbReference type="EMBL" id="AK175773">
    <property type="protein sequence ID" value="BAD43536.1"/>
    <property type="molecule type" value="mRNA"/>
</dbReference>
<dbReference type="EMBL" id="AK175835">
    <property type="protein sequence ID" value="BAD43598.1"/>
    <property type="molecule type" value="mRNA"/>
</dbReference>
<dbReference type="EMBL" id="AK175881">
    <property type="protein sequence ID" value="BAD43644.1"/>
    <property type="molecule type" value="mRNA"/>
</dbReference>
<dbReference type="EMBL" id="AK175916">
    <property type="protein sequence ID" value="BAD43679.1"/>
    <property type="molecule type" value="mRNA"/>
</dbReference>
<dbReference type="EMBL" id="AK176017">
    <property type="protein sequence ID" value="BAD43780.1"/>
    <property type="molecule type" value="mRNA"/>
</dbReference>
<dbReference type="EMBL" id="AK176076">
    <property type="protein sequence ID" value="BAD43839.1"/>
    <property type="molecule type" value="mRNA"/>
</dbReference>
<dbReference type="EMBL" id="AK176160">
    <property type="protein sequence ID" value="BAD43923.1"/>
    <property type="status" value="ALT_FRAME"/>
    <property type="molecule type" value="mRNA"/>
</dbReference>
<dbReference type="EMBL" id="AK176590">
    <property type="protein sequence ID" value="BAD44353.1"/>
    <property type="molecule type" value="mRNA"/>
</dbReference>
<dbReference type="EMBL" id="AK175814">
    <property type="protein sequence ID" value="BAD43577.1"/>
    <property type="molecule type" value="mRNA"/>
</dbReference>
<dbReference type="EMBL" id="AK175832">
    <property type="protein sequence ID" value="BAD43595.1"/>
    <property type="molecule type" value="mRNA"/>
</dbReference>
<dbReference type="EMBL" id="AY085640">
    <property type="protein sequence ID" value="AAM62861.1"/>
    <property type="molecule type" value="mRNA"/>
</dbReference>
<dbReference type="PIR" id="A96717">
    <property type="entry name" value="A96717"/>
</dbReference>
<dbReference type="RefSeq" id="NP_564957.1">
    <molecule id="Q93V72-1"/>
    <property type="nucleotide sequence ID" value="NM_105597.3"/>
</dbReference>
<dbReference type="SMR" id="Q93V72"/>
<dbReference type="FunCoup" id="Q93V72">
    <property type="interactions" value="19"/>
</dbReference>
<dbReference type="STRING" id="3702.Q93V72"/>
<dbReference type="CAZy" id="CBM43">
    <property type="family name" value="Carbohydrate-Binding Module Family 43"/>
</dbReference>
<dbReference type="TCDB" id="1.I.2.1.1">
    <property type="family name" value="the plant plasmodesmata (ppd) family"/>
</dbReference>
<dbReference type="PaxDb" id="3702-AT1G69295.1"/>
<dbReference type="ProteomicsDB" id="236365">
    <molecule id="Q93V72-1"/>
</dbReference>
<dbReference type="EnsemblPlants" id="AT1G69295.1">
    <molecule id="Q93V72-1"/>
    <property type="protein sequence ID" value="AT1G69295.1"/>
    <property type="gene ID" value="AT1G69295"/>
</dbReference>
<dbReference type="GeneID" id="843261"/>
<dbReference type="Gramene" id="AT1G69295.1">
    <molecule id="Q93V72-1"/>
    <property type="protein sequence ID" value="AT1G69295.1"/>
    <property type="gene ID" value="AT1G69295"/>
</dbReference>
<dbReference type="KEGG" id="ath:AT1G69295"/>
<dbReference type="Araport" id="AT1G69295"/>
<dbReference type="TAIR" id="AT1G69295">
    <property type="gene designation" value="PDCB4"/>
</dbReference>
<dbReference type="eggNOG" id="ENOG502S0BH">
    <property type="taxonomic scope" value="Eukaryota"/>
</dbReference>
<dbReference type="HOGENOM" id="CLU_031666_1_0_1"/>
<dbReference type="InParanoid" id="Q93V72"/>
<dbReference type="OMA" id="ADCKQIS"/>
<dbReference type="PRO" id="PR:Q93V72"/>
<dbReference type="Proteomes" id="UP000006548">
    <property type="component" value="Chromosome 1"/>
</dbReference>
<dbReference type="ExpressionAtlas" id="Q93V72">
    <property type="expression patterns" value="baseline and differential"/>
</dbReference>
<dbReference type="GO" id="GO:0005739">
    <property type="term" value="C:mitochondrion"/>
    <property type="evidence" value="ECO:0007005"/>
    <property type="project" value="TAIR"/>
</dbReference>
<dbReference type="GO" id="GO:0005886">
    <property type="term" value="C:plasma membrane"/>
    <property type="evidence" value="ECO:0007669"/>
    <property type="project" value="UniProtKB-SubCell"/>
</dbReference>
<dbReference type="GO" id="GO:0009506">
    <property type="term" value="C:plasmodesma"/>
    <property type="evidence" value="ECO:0000314"/>
    <property type="project" value="TAIR"/>
</dbReference>
<dbReference type="GO" id="GO:0098552">
    <property type="term" value="C:side of membrane"/>
    <property type="evidence" value="ECO:0007669"/>
    <property type="project" value="UniProtKB-KW"/>
</dbReference>
<dbReference type="GO" id="GO:0001872">
    <property type="term" value="F:(1-&gt;3)-beta-D-glucan binding"/>
    <property type="evidence" value="ECO:0000250"/>
    <property type="project" value="TAIR"/>
</dbReference>
<dbReference type="GO" id="GO:0030247">
    <property type="term" value="F:polysaccharide binding"/>
    <property type="evidence" value="ECO:0000250"/>
    <property type="project" value="TAIR"/>
</dbReference>
<dbReference type="Gene3D" id="1.20.58.1040">
    <property type="match status" value="1"/>
</dbReference>
<dbReference type="InterPro" id="IPR012946">
    <property type="entry name" value="X8"/>
</dbReference>
<dbReference type="InterPro" id="IPR044788">
    <property type="entry name" value="X8_dom_prot"/>
</dbReference>
<dbReference type="PANTHER" id="PTHR31044">
    <property type="entry name" value="BETA-1,3 GLUCANASE"/>
    <property type="match status" value="1"/>
</dbReference>
<dbReference type="PANTHER" id="PTHR31044:SF60">
    <property type="entry name" value="PLASMODESMATA CALLOSE-BINDING PROTEIN 4"/>
    <property type="match status" value="1"/>
</dbReference>
<dbReference type="Pfam" id="PF07983">
    <property type="entry name" value="X8"/>
    <property type="match status" value="1"/>
</dbReference>
<dbReference type="SMART" id="SM00768">
    <property type="entry name" value="X8"/>
    <property type="match status" value="1"/>
</dbReference>
<proteinExistence type="evidence at protein level"/>
<gene>
    <name type="primary">PDCB4</name>
    <name type="ordered locus">At1g69295</name>
    <name type="ORF">F23O10.12</name>
</gene>
<keyword id="KW-0025">Alternative splicing</keyword>
<keyword id="KW-0965">Cell junction</keyword>
<keyword id="KW-1003">Cell membrane</keyword>
<keyword id="KW-1015">Disulfide bond</keyword>
<keyword id="KW-0325">Glycoprotein</keyword>
<keyword id="KW-0336">GPI-anchor</keyword>
<keyword id="KW-0449">Lipoprotein</keyword>
<keyword id="KW-0472">Membrane</keyword>
<keyword id="KW-1185">Reference proteome</keyword>
<keyword id="KW-0732">Signal</keyword>
<protein>
    <recommendedName>
        <fullName>PLASMODESMATA CALLOSE-BINDING PROTEIN 4</fullName>
        <shortName>AtPDCB4</shortName>
    </recommendedName>
</protein>
<evidence type="ECO:0000250" key="1"/>
<evidence type="ECO:0000255" key="2"/>
<evidence type="ECO:0000256" key="3">
    <source>
        <dbReference type="SAM" id="MobiDB-lite"/>
    </source>
</evidence>
<evidence type="ECO:0000269" key="4">
    <source>
    </source>
</evidence>
<evidence type="ECO:0000303" key="5">
    <source>
    </source>
</evidence>
<evidence type="ECO:0000303" key="6">
    <source ref="5"/>
</evidence>
<evidence type="ECO:0000305" key="7"/>
<comment type="subcellular location">
    <subcellularLocation>
        <location evidence="4">Cell membrane</location>
        <topology evidence="4">Lipid-anchor</topology>
        <topology evidence="4">GPI-anchor</topology>
    </subcellularLocation>
    <subcellularLocation>
        <location evidence="4">Cell junction</location>
        <location evidence="4">Plasmodesma</location>
    </subcellularLocation>
</comment>
<comment type="alternative products">
    <event type="alternative splicing"/>
    <isoform>
        <id>Q93V72-1</id>
        <name>1</name>
        <sequence type="displayed"/>
    </isoform>
    <isoform>
        <id>Q93V72-2</id>
        <name>2</name>
        <sequence type="described" ref="VSP_034544"/>
    </isoform>
</comment>
<comment type="PTM">
    <text evidence="1">Contains two additional disulfide bonds.</text>
</comment>
<comment type="miscellaneous">
    <molecule>Isoform 2</molecule>
    <text evidence="7">May be due to intron retention.</text>
</comment>
<comment type="sequence caution" evidence="7">
    <conflict type="erroneous gene model prediction">
        <sequence resource="EMBL-CDS" id="AAG52501"/>
    </conflict>
    <text>The predicted gene has been split into 2 genes: At1g69290 and At1g69295.</text>
</comment>
<comment type="sequence caution" evidence="7">
    <conflict type="frameshift">
        <sequence resource="EMBL-CDS" id="BAD43464"/>
    </conflict>
</comment>
<comment type="sequence caution" evidence="7">
    <conflict type="frameshift">
        <sequence resource="EMBL-CDS" id="BAD43923"/>
    </conflict>
</comment>
<organism>
    <name type="scientific">Arabidopsis thaliana</name>
    <name type="common">Mouse-ear cress</name>
    <dbReference type="NCBI Taxonomy" id="3702"/>
    <lineage>
        <taxon>Eukaryota</taxon>
        <taxon>Viridiplantae</taxon>
        <taxon>Streptophyta</taxon>
        <taxon>Embryophyta</taxon>
        <taxon>Tracheophyta</taxon>
        <taxon>Spermatophyta</taxon>
        <taxon>Magnoliopsida</taxon>
        <taxon>eudicotyledons</taxon>
        <taxon>Gunneridae</taxon>
        <taxon>Pentapetalae</taxon>
        <taxon>rosids</taxon>
        <taxon>malvids</taxon>
        <taxon>Brassicales</taxon>
        <taxon>Brassicaceae</taxon>
        <taxon>Camelineae</taxon>
        <taxon>Arabidopsis</taxon>
    </lineage>
</organism>
<sequence>MSVLLPLCLIISMFTYSNAAYCLCKEGNEQVLQKAIDYACGNGADCTQIQPTGACYQPNTVKNHCDVAVNSYYQKKASSGATCDFNGAASPSTTPPSTASNCLTGSSSSGTPTTGTPTTGTPTSGTPTTGTPTTGTPTTGTPTSGTPTSGFPNTGTPNTGTNTGMPNSNGMPTSSSSSVFPGTTLGPTGSGGLGDPNAGEKLSVRTNTVVFLLTGVAAMLVI</sequence>
<accession>Q93V72</accession>
<accession>Q67ZF7</accession>
<accession>Q8GWY5</accession>
<accession>Q8LE41</accession>
<accession>Q9C982</accession>
<feature type="signal peptide" evidence="2">
    <location>
        <begin position="1"/>
        <end position="19"/>
    </location>
</feature>
<feature type="chain" id="PRO_0000342741" description="PLASMODESMATA CALLOSE-BINDING PROTEIN 4">
    <location>
        <begin position="20"/>
        <end position="197"/>
    </location>
</feature>
<feature type="propeptide" id="PRO_0000430193" description="Removed in mature form" evidence="2">
    <location>
        <begin position="198"/>
        <end position="222"/>
    </location>
</feature>
<feature type="region of interest" description="Disordered" evidence="3">
    <location>
        <begin position="88"/>
        <end position="199"/>
    </location>
</feature>
<feature type="compositionally biased region" description="Low complexity" evidence="3">
    <location>
        <begin position="88"/>
        <end position="187"/>
    </location>
</feature>
<feature type="lipid moiety-binding region" description="GPI-anchor amidated asparagine" evidence="2">
    <location>
        <position position="197"/>
    </location>
</feature>
<feature type="disulfide bond" evidence="1">
    <location>
        <begin position="22"/>
        <end position="83"/>
    </location>
</feature>
<feature type="splice variant" id="VSP_034544" description="In isoform 2." evidence="5 6">
    <location>
        <begin position="1"/>
        <end position="164"/>
    </location>
</feature>
<feature type="sequence conflict" description="In Ref. 6; AAM62861." evidence="7" ref="6">
    <original>N</original>
    <variation>S</variation>
    <location>
        <position position="101"/>
    </location>
</feature>
<feature type="sequence conflict" description="In Ref. 6; AAM62861." evidence="7" ref="6">
    <original>T</original>
    <variation>S</variation>
    <location>
        <position position="119"/>
    </location>
</feature>
<feature type="sequence conflict" description="In Ref. 6; AAM62861." evidence="7" ref="6">
    <original>V</original>
    <variation>L</variation>
    <location>
        <position position="209"/>
    </location>
</feature>